<accession>Q7JH05</accession>
<protein>
    <recommendedName>
        <fullName>Sperm protamine P1</fullName>
    </recommendedName>
</protein>
<gene>
    <name type="primary">PRM1</name>
</gene>
<evidence type="ECO:0000250" key="1"/>
<evidence type="ECO:0000305" key="2"/>
<reference key="1">
    <citation type="journal article" date="2002" name="Mol. Phylogenet. Evol.">
        <title>Characterization and phylogenetic utility of the mammalian protamine P1 gene.</title>
        <authorList>
            <person name="Van Den Bussche R.A."/>
            <person name="Hoofer S.R."/>
            <person name="Hansen E.W."/>
        </authorList>
    </citation>
    <scope>NUCLEOTIDE SEQUENCE [GENOMIC DNA]</scope>
</reference>
<organism>
    <name type="scientific">Eptesicus fuscus</name>
    <name type="common">Big brown bat</name>
    <name type="synonym">Vespertilio fuscus</name>
    <dbReference type="NCBI Taxonomy" id="29078"/>
    <lineage>
        <taxon>Eukaryota</taxon>
        <taxon>Metazoa</taxon>
        <taxon>Chordata</taxon>
        <taxon>Craniata</taxon>
        <taxon>Vertebrata</taxon>
        <taxon>Euteleostomi</taxon>
        <taxon>Mammalia</taxon>
        <taxon>Eutheria</taxon>
        <taxon>Laurasiatheria</taxon>
        <taxon>Chiroptera</taxon>
        <taxon>Yangochiroptera</taxon>
        <taxon>Vespertilionidae</taxon>
        <taxon>Eptesicus</taxon>
    </lineage>
</organism>
<comment type="function">
    <text evidence="1">Protamines substitute for histones in the chromatin of sperm during the haploid phase of spermatogenesis. They compact sperm DNA into a highly condensed, stable and inactive complex (By similarity).</text>
</comment>
<comment type="subcellular location">
    <subcellularLocation>
        <location evidence="1">Nucleus</location>
    </subcellularLocation>
    <subcellularLocation>
        <location evidence="1">Chromosome</location>
    </subcellularLocation>
</comment>
<comment type="tissue specificity">
    <text>Testis.</text>
</comment>
<comment type="similarity">
    <text evidence="2">Belongs to the protamine P1 family.</text>
</comment>
<feature type="chain" id="PRO_0000191477" description="Sperm protamine P1">
    <location>
        <begin position="1"/>
        <end position="48"/>
    </location>
</feature>
<sequence>MARYRCCRSRSRCRRRRRRCYRRRRRCCRRRRRRVCCRRYTVIRCRRR</sequence>
<name>HSP1_EPTFU</name>
<proteinExistence type="evidence at transcript level"/>
<keyword id="KW-0158">Chromosome</keyword>
<keyword id="KW-0217">Developmental protein</keyword>
<keyword id="KW-0221">Differentiation</keyword>
<keyword id="KW-0226">DNA condensation</keyword>
<keyword id="KW-0238">DNA-binding</keyword>
<keyword id="KW-0544">Nucleosome core</keyword>
<keyword id="KW-0539">Nucleus</keyword>
<keyword id="KW-0744">Spermatogenesis</keyword>
<dbReference type="EMBL" id="AF435942">
    <property type="protein sequence ID" value="AAL35576.1"/>
    <property type="molecule type" value="Genomic_DNA"/>
</dbReference>
<dbReference type="GO" id="GO:0000786">
    <property type="term" value="C:nucleosome"/>
    <property type="evidence" value="ECO:0007669"/>
    <property type="project" value="UniProtKB-KW"/>
</dbReference>
<dbReference type="GO" id="GO:0005634">
    <property type="term" value="C:nucleus"/>
    <property type="evidence" value="ECO:0007669"/>
    <property type="project" value="UniProtKB-SubCell"/>
</dbReference>
<dbReference type="GO" id="GO:0003677">
    <property type="term" value="F:DNA binding"/>
    <property type="evidence" value="ECO:0007669"/>
    <property type="project" value="UniProtKB-KW"/>
</dbReference>
<dbReference type="GO" id="GO:0030261">
    <property type="term" value="P:chromosome condensation"/>
    <property type="evidence" value="ECO:0007669"/>
    <property type="project" value="UniProtKB-KW"/>
</dbReference>
<dbReference type="GO" id="GO:0035092">
    <property type="term" value="P:sperm DNA condensation"/>
    <property type="evidence" value="ECO:0007669"/>
    <property type="project" value="InterPro"/>
</dbReference>
<dbReference type="InterPro" id="IPR000221">
    <property type="entry name" value="Protamine_P1"/>
</dbReference>
<dbReference type="Pfam" id="PF00260">
    <property type="entry name" value="Protamine_P1"/>
    <property type="match status" value="1"/>
</dbReference>